<keyword id="KW-0067">ATP-binding</keyword>
<keyword id="KW-0963">Cytoplasm</keyword>
<keyword id="KW-0436">Ligase</keyword>
<keyword id="KW-0547">Nucleotide-binding</keyword>
<keyword id="KW-0658">Purine biosynthesis</keyword>
<keyword id="KW-1185">Reference proteome</keyword>
<name>PUR5_CUPNH</name>
<dbReference type="EC" id="6.3.3.1" evidence="1"/>
<dbReference type="EMBL" id="AM260479">
    <property type="protein sequence ID" value="CAJ94152.1"/>
    <property type="molecule type" value="Genomic_DNA"/>
</dbReference>
<dbReference type="RefSeq" id="WP_011615979.1">
    <property type="nucleotide sequence ID" value="NC_008313.1"/>
</dbReference>
<dbReference type="SMR" id="Q0K769"/>
<dbReference type="STRING" id="381666.H16_A3077"/>
<dbReference type="KEGG" id="reh:H16_A3077"/>
<dbReference type="PATRIC" id="fig|381666.6.peg.3478"/>
<dbReference type="eggNOG" id="COG0150">
    <property type="taxonomic scope" value="Bacteria"/>
</dbReference>
<dbReference type="HOGENOM" id="CLU_047116_0_0_4"/>
<dbReference type="OrthoDB" id="9777881at2"/>
<dbReference type="UniPathway" id="UPA00074">
    <property type="reaction ID" value="UER00129"/>
</dbReference>
<dbReference type="Proteomes" id="UP000008210">
    <property type="component" value="Chromosome 1"/>
</dbReference>
<dbReference type="GO" id="GO:0005829">
    <property type="term" value="C:cytosol"/>
    <property type="evidence" value="ECO:0007669"/>
    <property type="project" value="TreeGrafter"/>
</dbReference>
<dbReference type="GO" id="GO:0005524">
    <property type="term" value="F:ATP binding"/>
    <property type="evidence" value="ECO:0007669"/>
    <property type="project" value="UniProtKB-KW"/>
</dbReference>
<dbReference type="GO" id="GO:0004637">
    <property type="term" value="F:phosphoribosylamine-glycine ligase activity"/>
    <property type="evidence" value="ECO:0007669"/>
    <property type="project" value="TreeGrafter"/>
</dbReference>
<dbReference type="GO" id="GO:0004641">
    <property type="term" value="F:phosphoribosylformylglycinamidine cyclo-ligase activity"/>
    <property type="evidence" value="ECO:0007669"/>
    <property type="project" value="UniProtKB-UniRule"/>
</dbReference>
<dbReference type="GO" id="GO:0006189">
    <property type="term" value="P:'de novo' IMP biosynthetic process"/>
    <property type="evidence" value="ECO:0007669"/>
    <property type="project" value="UniProtKB-UniRule"/>
</dbReference>
<dbReference type="GO" id="GO:0046084">
    <property type="term" value="P:adenine biosynthetic process"/>
    <property type="evidence" value="ECO:0007669"/>
    <property type="project" value="TreeGrafter"/>
</dbReference>
<dbReference type="CDD" id="cd02196">
    <property type="entry name" value="PurM"/>
    <property type="match status" value="1"/>
</dbReference>
<dbReference type="FunFam" id="3.30.1330.10:FF:000001">
    <property type="entry name" value="Phosphoribosylformylglycinamidine cyclo-ligase"/>
    <property type="match status" value="1"/>
</dbReference>
<dbReference type="FunFam" id="3.90.650.10:FF:000001">
    <property type="entry name" value="Phosphoribosylformylglycinamidine cyclo-ligase"/>
    <property type="match status" value="1"/>
</dbReference>
<dbReference type="Gene3D" id="3.90.650.10">
    <property type="entry name" value="PurM-like C-terminal domain"/>
    <property type="match status" value="1"/>
</dbReference>
<dbReference type="Gene3D" id="3.30.1330.10">
    <property type="entry name" value="PurM-like, N-terminal domain"/>
    <property type="match status" value="1"/>
</dbReference>
<dbReference type="HAMAP" id="MF_00741">
    <property type="entry name" value="AIRS"/>
    <property type="match status" value="1"/>
</dbReference>
<dbReference type="InterPro" id="IPR010918">
    <property type="entry name" value="PurM-like_C_dom"/>
</dbReference>
<dbReference type="InterPro" id="IPR036676">
    <property type="entry name" value="PurM-like_C_sf"/>
</dbReference>
<dbReference type="InterPro" id="IPR016188">
    <property type="entry name" value="PurM-like_N"/>
</dbReference>
<dbReference type="InterPro" id="IPR036921">
    <property type="entry name" value="PurM-like_N_sf"/>
</dbReference>
<dbReference type="InterPro" id="IPR004733">
    <property type="entry name" value="PurM_cligase"/>
</dbReference>
<dbReference type="NCBIfam" id="TIGR00878">
    <property type="entry name" value="purM"/>
    <property type="match status" value="1"/>
</dbReference>
<dbReference type="PANTHER" id="PTHR10520:SF12">
    <property type="entry name" value="TRIFUNCTIONAL PURINE BIOSYNTHETIC PROTEIN ADENOSINE-3"/>
    <property type="match status" value="1"/>
</dbReference>
<dbReference type="PANTHER" id="PTHR10520">
    <property type="entry name" value="TRIFUNCTIONAL PURINE BIOSYNTHETIC PROTEIN ADENOSINE-3-RELATED"/>
    <property type="match status" value="1"/>
</dbReference>
<dbReference type="Pfam" id="PF00586">
    <property type="entry name" value="AIRS"/>
    <property type="match status" value="1"/>
</dbReference>
<dbReference type="Pfam" id="PF02769">
    <property type="entry name" value="AIRS_C"/>
    <property type="match status" value="1"/>
</dbReference>
<dbReference type="SUPFAM" id="SSF56042">
    <property type="entry name" value="PurM C-terminal domain-like"/>
    <property type="match status" value="1"/>
</dbReference>
<dbReference type="SUPFAM" id="SSF55326">
    <property type="entry name" value="PurM N-terminal domain-like"/>
    <property type="match status" value="1"/>
</dbReference>
<organism>
    <name type="scientific">Cupriavidus necator (strain ATCC 17699 / DSM 428 / KCTC 22496 / NCIMB 10442 / H16 / Stanier 337)</name>
    <name type="common">Ralstonia eutropha</name>
    <dbReference type="NCBI Taxonomy" id="381666"/>
    <lineage>
        <taxon>Bacteria</taxon>
        <taxon>Pseudomonadati</taxon>
        <taxon>Pseudomonadota</taxon>
        <taxon>Betaproteobacteria</taxon>
        <taxon>Burkholderiales</taxon>
        <taxon>Burkholderiaceae</taxon>
        <taxon>Cupriavidus</taxon>
    </lineage>
</organism>
<sequence length="350" mass="37258">MSASPTAGQAGLSYRDAGVDIDAGDALVDRIKPFAKRTMREGVMAGIGGFGALFELSKKFQEPVLVSGTDGVGTKLKLAFQLNRHDTVGQDLVAMSVNDILVQGAEPLFFLDYFACGKLDVDTAATVIQGIARGCELAGCALIGGETAEMPSMYPDGEYDLAGFAVGAVEKKKIIDGSTITPGDVVLGLASSGAHSNGYSLVRKIIEVARPDLNADFHGQRLQDAIMAPTRIYVKPLLSLIETLPVKGMAHITGGGLTENVPRVLAQDVTAVLKRDAWTLPPLFQWLQAQGRVADDEMHRVFNCGIGMVVIVAKEDAERAIRHLQAAGEAVWQIGEIRERAEGEAQTIVV</sequence>
<evidence type="ECO:0000255" key="1">
    <source>
        <dbReference type="HAMAP-Rule" id="MF_00741"/>
    </source>
</evidence>
<comment type="catalytic activity">
    <reaction evidence="1">
        <text>2-formamido-N(1)-(5-O-phospho-beta-D-ribosyl)acetamidine + ATP = 5-amino-1-(5-phospho-beta-D-ribosyl)imidazole + ADP + phosphate + H(+)</text>
        <dbReference type="Rhea" id="RHEA:23032"/>
        <dbReference type="ChEBI" id="CHEBI:15378"/>
        <dbReference type="ChEBI" id="CHEBI:30616"/>
        <dbReference type="ChEBI" id="CHEBI:43474"/>
        <dbReference type="ChEBI" id="CHEBI:137981"/>
        <dbReference type="ChEBI" id="CHEBI:147287"/>
        <dbReference type="ChEBI" id="CHEBI:456216"/>
        <dbReference type="EC" id="6.3.3.1"/>
    </reaction>
</comment>
<comment type="pathway">
    <text evidence="1">Purine metabolism; IMP biosynthesis via de novo pathway; 5-amino-1-(5-phospho-D-ribosyl)imidazole from N(2)-formyl-N(1)-(5-phospho-D-ribosyl)glycinamide: step 2/2.</text>
</comment>
<comment type="subcellular location">
    <subcellularLocation>
        <location evidence="1">Cytoplasm</location>
    </subcellularLocation>
</comment>
<comment type="similarity">
    <text evidence="1">Belongs to the AIR synthase family.</text>
</comment>
<proteinExistence type="inferred from homology"/>
<reference key="1">
    <citation type="journal article" date="2006" name="Nat. Biotechnol.">
        <title>Genome sequence of the bioplastic-producing 'Knallgas' bacterium Ralstonia eutropha H16.</title>
        <authorList>
            <person name="Pohlmann A."/>
            <person name="Fricke W.F."/>
            <person name="Reinecke F."/>
            <person name="Kusian B."/>
            <person name="Liesegang H."/>
            <person name="Cramm R."/>
            <person name="Eitinger T."/>
            <person name="Ewering C."/>
            <person name="Poetter M."/>
            <person name="Schwartz E."/>
            <person name="Strittmatter A."/>
            <person name="Voss I."/>
            <person name="Gottschalk G."/>
            <person name="Steinbuechel A."/>
            <person name="Friedrich B."/>
            <person name="Bowien B."/>
        </authorList>
    </citation>
    <scope>NUCLEOTIDE SEQUENCE [LARGE SCALE GENOMIC DNA]</scope>
    <source>
        <strain>ATCC 17699 / DSM 428 / KCTC 22496 / NCIMB 10442 / H16 / Stanier 337</strain>
    </source>
</reference>
<protein>
    <recommendedName>
        <fullName evidence="1">Phosphoribosylformylglycinamidine cyclo-ligase</fullName>
        <ecNumber evidence="1">6.3.3.1</ecNumber>
    </recommendedName>
    <alternativeName>
        <fullName evidence="1">AIR synthase</fullName>
    </alternativeName>
    <alternativeName>
        <fullName evidence="1">AIRS</fullName>
    </alternativeName>
    <alternativeName>
        <fullName evidence="1">Phosphoribosyl-aminoimidazole synthetase</fullName>
    </alternativeName>
</protein>
<accession>Q0K769</accession>
<feature type="chain" id="PRO_1000046462" description="Phosphoribosylformylglycinamidine cyclo-ligase">
    <location>
        <begin position="1"/>
        <end position="350"/>
    </location>
</feature>
<gene>
    <name evidence="1" type="primary">purM</name>
    <name type="ordered locus">H16_A3077</name>
</gene>